<dbReference type="EMBL" id="AB016875">
    <property type="status" value="NOT_ANNOTATED_CDS"/>
    <property type="molecule type" value="Genomic_DNA"/>
</dbReference>
<dbReference type="EMBL" id="AB025638">
    <property type="status" value="NOT_ANNOTATED_CDS"/>
    <property type="molecule type" value="Genomic_DNA"/>
</dbReference>
<dbReference type="EMBL" id="CP002688">
    <property type="protein sequence ID" value="AED94974.1"/>
    <property type="molecule type" value="Genomic_DNA"/>
</dbReference>
<dbReference type="EMBL" id="AY803252">
    <property type="protein sequence ID" value="AAX39293.1"/>
    <property type="molecule type" value="mRNA"/>
</dbReference>
<dbReference type="RefSeq" id="NP_001032003.1">
    <property type="nucleotide sequence ID" value="NM_001036926.5"/>
</dbReference>
<dbReference type="SMR" id="Q4VP10"/>
<dbReference type="STRING" id="3702.Q4VP10"/>
<dbReference type="GlyCosmos" id="Q4VP10">
    <property type="glycosylation" value="1 site, No reported glycans"/>
</dbReference>
<dbReference type="GlyGen" id="Q4VP10">
    <property type="glycosylation" value="1 site"/>
</dbReference>
<dbReference type="PaxDb" id="3702-AT5G43513.1"/>
<dbReference type="EnsemblPlants" id="AT5G43513.1">
    <property type="protein sequence ID" value="AT5G43513.1"/>
    <property type="gene ID" value="AT5G43513"/>
</dbReference>
<dbReference type="GeneID" id="3771417"/>
<dbReference type="Gramene" id="AT5G43513.1">
    <property type="protein sequence ID" value="AT5G43513.1"/>
    <property type="gene ID" value="AT5G43513"/>
</dbReference>
<dbReference type="KEGG" id="ath:AT5G43513"/>
<dbReference type="Araport" id="AT5G43513"/>
<dbReference type="TAIR" id="AT5G43513">
    <property type="gene designation" value="LURE1.3"/>
</dbReference>
<dbReference type="HOGENOM" id="CLU_180309_0_0_1"/>
<dbReference type="InParanoid" id="Q4VP10"/>
<dbReference type="OMA" id="ELKQDWI"/>
<dbReference type="PhylomeDB" id="Q4VP10"/>
<dbReference type="PRO" id="PR:Q4VP10"/>
<dbReference type="Proteomes" id="UP000006548">
    <property type="component" value="Chromosome 5"/>
</dbReference>
<dbReference type="GO" id="GO:0005576">
    <property type="term" value="C:extracellular region"/>
    <property type="evidence" value="ECO:0007669"/>
    <property type="project" value="UniProtKB-SubCell"/>
</dbReference>
<dbReference type="GO" id="GO:0010183">
    <property type="term" value="P:pollen tube guidance"/>
    <property type="evidence" value="ECO:0000314"/>
    <property type="project" value="TAIR"/>
</dbReference>
<dbReference type="CDD" id="cd21804">
    <property type="entry name" value="DEFL_AtLURE1-like"/>
    <property type="match status" value="1"/>
</dbReference>
<dbReference type="InterPro" id="IPR047497">
    <property type="entry name" value="DEFL_AtLURE1-like"/>
</dbReference>
<proteinExistence type="evidence at protein level"/>
<comment type="function">
    <text evidence="5">Pollen tube attractants guiding pollen tubes to the ovular micropyle. Attracts pollen tubes from both A.thaliana and A.lyrata.</text>
</comment>
<comment type="subunit">
    <text evidence="6">Binds to PRK6 LRRs.</text>
</comment>
<comment type="subcellular location">
    <subcellularLocation>
        <location evidence="5">Secreted</location>
    </subcellularLocation>
    <text evidence="5">found at the micropylar end of the female gametophyte, possibly at the filiform apparatus of the synergid cell. Difuses to the surface of the funiculus of the ovule through the micropyle.</text>
</comment>
<comment type="tissue specificity">
    <text evidence="5">Expressed in the pistil. Detected exclusively in the synergid cells.</text>
</comment>
<comment type="similarity">
    <text evidence="9">Belongs to the DEFL family.</text>
</comment>
<comment type="caution">
    <text evidence="9">Lacks 1 of the 4 disulfide bonds, which are conserved features of the family.</text>
</comment>
<accession>Q4VP10</accession>
<name>LUR13_ARATH</name>
<keyword id="KW-1015">Disulfide bond</keyword>
<keyword id="KW-0325">Glycoprotein</keyword>
<keyword id="KW-1185">Reference proteome</keyword>
<keyword id="KW-0964">Secreted</keyword>
<keyword id="KW-0732">Signal</keyword>
<organism>
    <name type="scientific">Arabidopsis thaliana</name>
    <name type="common">Mouse-ear cress</name>
    <dbReference type="NCBI Taxonomy" id="3702"/>
    <lineage>
        <taxon>Eukaryota</taxon>
        <taxon>Viridiplantae</taxon>
        <taxon>Streptophyta</taxon>
        <taxon>Embryophyta</taxon>
        <taxon>Tracheophyta</taxon>
        <taxon>Spermatophyta</taxon>
        <taxon>Magnoliopsida</taxon>
        <taxon>eudicotyledons</taxon>
        <taxon>Gunneridae</taxon>
        <taxon>Pentapetalae</taxon>
        <taxon>rosids</taxon>
        <taxon>malvids</taxon>
        <taxon>Brassicales</taxon>
        <taxon>Brassicaceae</taxon>
        <taxon>Camelineae</taxon>
        <taxon>Arabidopsis</taxon>
    </lineage>
</organism>
<sequence length="91" mass="10462">MKLPFIFLITLLIFVSSCTSILINESSDEERTYSFSPTTSPFDPRSLNQELKIGRIGYCFDCARACMRRGKYIRTCSFERKLCRCSISGIK</sequence>
<reference key="1">
    <citation type="journal article" date="1998" name="DNA Res.">
        <title>Structural analysis of Arabidopsis thaliana chromosome 5. VIII. Sequence features of the regions of 1,081,958 bp covered by seventeen physically assigned P1 and TAC clones.</title>
        <authorList>
            <person name="Asamizu E."/>
            <person name="Sato S."/>
            <person name="Kaneko T."/>
            <person name="Nakamura Y."/>
            <person name="Kotani H."/>
            <person name="Miyajima N."/>
            <person name="Tabata S."/>
        </authorList>
    </citation>
    <scope>NUCLEOTIDE SEQUENCE [LARGE SCALE GENOMIC DNA]</scope>
    <source>
        <strain>cv. Columbia</strain>
    </source>
</reference>
<reference key="2">
    <citation type="journal article" date="2000" name="DNA Res.">
        <title>Structural analysis of Arabidopsis thaliana chromosome 5. X. Sequence features of the regions of 3,076,755 bp covered by sixty P1 and TAC clones.</title>
        <authorList>
            <person name="Sato S."/>
            <person name="Nakamura Y."/>
            <person name="Kaneko T."/>
            <person name="Katoh T."/>
            <person name="Asamizu E."/>
            <person name="Kotani H."/>
            <person name="Tabata S."/>
        </authorList>
    </citation>
    <scope>NUCLEOTIDE SEQUENCE [LARGE SCALE GENOMIC DNA]</scope>
    <source>
        <strain>cv. Columbia</strain>
    </source>
</reference>
<reference key="3">
    <citation type="journal article" date="2017" name="Plant J.">
        <title>Araport11: a complete reannotation of the Arabidopsis thaliana reference genome.</title>
        <authorList>
            <person name="Cheng C.Y."/>
            <person name="Krishnakumar V."/>
            <person name="Chan A.P."/>
            <person name="Thibaud-Nissen F."/>
            <person name="Schobel S."/>
            <person name="Town C.D."/>
        </authorList>
    </citation>
    <scope>GENOME REANNOTATION</scope>
    <source>
        <strain>cv. Columbia</strain>
    </source>
</reference>
<reference key="4">
    <citation type="journal article" date="2005" name="Plant Physiol.">
        <title>Genome organization of more than 300 defensin-like genes in Arabidopsis.</title>
        <authorList>
            <person name="Silverstein K.A.T."/>
            <person name="Graham M.A."/>
            <person name="Paape T.D."/>
            <person name="VandenBosch K.A."/>
        </authorList>
    </citation>
    <scope>NUCLEOTIDE SEQUENCE [MRNA] OF 15-76</scope>
    <scope>GENE FAMILY</scope>
</reference>
<reference key="5">
    <citation type="journal article" date="2012" name="PLoS Biol.">
        <title>A species-specific cluster of defensin-like genes encodes diffusible pollen tube attractants in Arabidopsis.</title>
        <authorList>
            <person name="Takeuchi H."/>
            <person name="Higashiyama T."/>
        </authorList>
    </citation>
    <scope>FUNCTION</scope>
    <scope>GENE FAMILY</scope>
    <scope>NOMENCLATURE</scope>
    <scope>TISSUE SPECIFICITY</scope>
    <scope>SUBCELLULAR LOCATION</scope>
</reference>
<reference key="6">
    <citation type="journal article" date="2017" name="Nat. Commun.">
        <title>Structural basis for receptor recognition of pollen tube attraction peptides.</title>
        <authorList>
            <person name="Zhang X."/>
            <person name="Liu W."/>
            <person name="Nagae T.T."/>
            <person name="Takeuchi H."/>
            <person name="Zhang H."/>
            <person name="Han Z."/>
            <person name="Higashiyama T."/>
            <person name="Chai J."/>
        </authorList>
    </citation>
    <scope>INTERACTION WITH PRK6</scope>
</reference>
<protein>
    <recommendedName>
        <fullName evidence="8">Protein LURE 1.3</fullName>
        <shortName evidence="8">AtLURE1.3</shortName>
    </recommendedName>
    <alternativeName>
        <fullName evidence="8">Cysteine-Rich Peptide 810_1.3</fullName>
        <shortName evidence="8">CRP810_1.3</shortName>
    </alternativeName>
    <alternativeName>
        <fullName evidence="7">Defensin-like protein 214</fullName>
    </alternativeName>
</protein>
<gene>
    <name evidence="8" type="primary">LURE1.3</name>
    <name evidence="8" type="synonym">CRP810_1.3</name>
    <name evidence="10" type="ordered locus">At5g43513</name>
    <name evidence="11" type="ORF">K9D7</name>
    <name evidence="12" type="ORF">MWF20</name>
</gene>
<evidence type="ECO:0000250" key="1">
    <source>
        <dbReference type="UniProtKB" id="Q09198"/>
    </source>
</evidence>
<evidence type="ECO:0000250" key="2">
    <source>
        <dbReference type="UniProtKB" id="Q4VP08"/>
    </source>
</evidence>
<evidence type="ECO:0000255" key="3"/>
<evidence type="ECO:0000255" key="4">
    <source>
        <dbReference type="PROSITE-ProRule" id="PRU00498"/>
    </source>
</evidence>
<evidence type="ECO:0000269" key="5">
    <source>
    </source>
</evidence>
<evidence type="ECO:0000269" key="6">
    <source>
    </source>
</evidence>
<evidence type="ECO:0000303" key="7">
    <source>
    </source>
</evidence>
<evidence type="ECO:0000303" key="8">
    <source>
    </source>
</evidence>
<evidence type="ECO:0000305" key="9"/>
<evidence type="ECO:0000312" key="10">
    <source>
        <dbReference type="Araport" id="AT5G43513"/>
    </source>
</evidence>
<evidence type="ECO:0000312" key="11">
    <source>
        <dbReference type="EMBL" id="AB016875"/>
    </source>
</evidence>
<evidence type="ECO:0000312" key="12">
    <source>
        <dbReference type="EMBL" id="AB025638"/>
    </source>
</evidence>
<feature type="signal peptide" evidence="3">
    <location>
        <begin position="1"/>
        <end position="20"/>
    </location>
</feature>
<feature type="chain" id="PRO_0000379706" description="Protein LURE 1.3">
    <location>
        <begin position="21"/>
        <end position="91"/>
    </location>
</feature>
<feature type="region of interest" description="PRK6 binding" evidence="2">
    <location>
        <begin position="68"/>
        <end position="88"/>
    </location>
</feature>
<feature type="glycosylation site" description="N-linked (GlcNAc...) asparagine" evidence="4">
    <location>
        <position position="24"/>
    </location>
</feature>
<feature type="disulfide bond" evidence="1">
    <location>
        <begin position="59"/>
        <end position="76"/>
    </location>
</feature>
<feature type="disulfide bond" evidence="1">
    <location>
        <begin position="62"/>
        <end position="83"/>
    </location>
</feature>
<feature type="disulfide bond" evidence="1">
    <location>
        <begin position="66"/>
        <end position="85"/>
    </location>
</feature>